<proteinExistence type="inferred from homology"/>
<feature type="chain" id="PRO_1000122846" description="Protein TusC">
    <location>
        <begin position="1"/>
        <end position="118"/>
    </location>
</feature>
<keyword id="KW-0963">Cytoplasm</keyword>
<keyword id="KW-0819">tRNA processing</keyword>
<evidence type="ECO:0000255" key="1">
    <source>
        <dbReference type="HAMAP-Rule" id="MF_00389"/>
    </source>
</evidence>
<comment type="function">
    <text evidence="1">Part of a sulfur-relay system required for 2-thiolation of 5-methylaminomethyl-2-thiouridine (mnm(5)s(2)U) at tRNA wobble positions.</text>
</comment>
<comment type="subunit">
    <text evidence="1">Heterohexamer, formed by a dimer of trimers. The hexameric TusBCD complex contains 2 copies each of TusB, TusC and TusD. The TusBCD complex interacts with TusE.</text>
</comment>
<comment type="subcellular location">
    <subcellularLocation>
        <location evidence="1">Cytoplasm</location>
    </subcellularLocation>
</comment>
<comment type="similarity">
    <text evidence="1">Belongs to the DsrF/TusC family.</text>
</comment>
<dbReference type="EMBL" id="AM933172">
    <property type="protein sequence ID" value="CAR34853.1"/>
    <property type="molecule type" value="Genomic_DNA"/>
</dbReference>
<dbReference type="RefSeq" id="WP_000820705.1">
    <property type="nucleotide sequence ID" value="NC_011294.1"/>
</dbReference>
<dbReference type="SMR" id="B5R2A1"/>
<dbReference type="GeneID" id="66757785"/>
<dbReference type="KEGG" id="set:SEN3278"/>
<dbReference type="HOGENOM" id="CLU_155943_1_0_6"/>
<dbReference type="Proteomes" id="UP000000613">
    <property type="component" value="Chromosome"/>
</dbReference>
<dbReference type="GO" id="GO:0005737">
    <property type="term" value="C:cytoplasm"/>
    <property type="evidence" value="ECO:0007669"/>
    <property type="project" value="UniProtKB-SubCell"/>
</dbReference>
<dbReference type="GO" id="GO:0008033">
    <property type="term" value="P:tRNA processing"/>
    <property type="evidence" value="ECO:0007669"/>
    <property type="project" value="UniProtKB-UniRule"/>
</dbReference>
<dbReference type="Gene3D" id="3.40.1260.10">
    <property type="entry name" value="DsrEFH-like"/>
    <property type="match status" value="1"/>
</dbReference>
<dbReference type="HAMAP" id="MF_00389">
    <property type="entry name" value="Thiourid_synth_C"/>
    <property type="match status" value="1"/>
</dbReference>
<dbReference type="InterPro" id="IPR027396">
    <property type="entry name" value="DsrEFH-like"/>
</dbReference>
<dbReference type="InterPro" id="IPR003787">
    <property type="entry name" value="Sulphur_relay_DsrE/F-like"/>
</dbReference>
<dbReference type="InterPro" id="IPR037450">
    <property type="entry name" value="Sulphur_relay_TusC"/>
</dbReference>
<dbReference type="InterPro" id="IPR017462">
    <property type="entry name" value="Sulphur_relay_TusC/DsrF"/>
</dbReference>
<dbReference type="NCBIfam" id="NF001238">
    <property type="entry name" value="PRK00211.1"/>
    <property type="match status" value="1"/>
</dbReference>
<dbReference type="NCBIfam" id="TIGR03010">
    <property type="entry name" value="sulf_tusC_dsrF"/>
    <property type="match status" value="1"/>
</dbReference>
<dbReference type="PANTHER" id="PTHR38780">
    <property type="entry name" value="PROTEIN TUSC"/>
    <property type="match status" value="1"/>
</dbReference>
<dbReference type="PANTHER" id="PTHR38780:SF1">
    <property type="entry name" value="PROTEIN TUSC"/>
    <property type="match status" value="1"/>
</dbReference>
<dbReference type="Pfam" id="PF02635">
    <property type="entry name" value="DsrE"/>
    <property type="match status" value="1"/>
</dbReference>
<dbReference type="SUPFAM" id="SSF75169">
    <property type="entry name" value="DsrEFH-like"/>
    <property type="match status" value="1"/>
</dbReference>
<protein>
    <recommendedName>
        <fullName evidence="1">Protein TusC</fullName>
    </recommendedName>
    <alternativeName>
        <fullName evidence="1">tRNA 2-thiouridine synthesizing protein C</fullName>
    </alternativeName>
</protein>
<reference key="1">
    <citation type="journal article" date="2008" name="Genome Res.">
        <title>Comparative genome analysis of Salmonella enteritidis PT4 and Salmonella gallinarum 287/91 provides insights into evolutionary and host adaptation pathways.</title>
        <authorList>
            <person name="Thomson N.R."/>
            <person name="Clayton D.J."/>
            <person name="Windhorst D."/>
            <person name="Vernikos G."/>
            <person name="Davidson S."/>
            <person name="Churcher C."/>
            <person name="Quail M.A."/>
            <person name="Stevens M."/>
            <person name="Jones M.A."/>
            <person name="Watson M."/>
            <person name="Barron A."/>
            <person name="Layton A."/>
            <person name="Pickard D."/>
            <person name="Kingsley R.A."/>
            <person name="Bignell A."/>
            <person name="Clark L."/>
            <person name="Harris B."/>
            <person name="Ormond D."/>
            <person name="Abdellah Z."/>
            <person name="Brooks K."/>
            <person name="Cherevach I."/>
            <person name="Chillingworth T."/>
            <person name="Woodward J."/>
            <person name="Norberczak H."/>
            <person name="Lord A."/>
            <person name="Arrowsmith C."/>
            <person name="Jagels K."/>
            <person name="Moule S."/>
            <person name="Mungall K."/>
            <person name="Saunders M."/>
            <person name="Whitehead S."/>
            <person name="Chabalgoity J.A."/>
            <person name="Maskell D."/>
            <person name="Humphreys T."/>
            <person name="Roberts M."/>
            <person name="Barrow P.A."/>
            <person name="Dougan G."/>
            <person name="Parkhill J."/>
        </authorList>
    </citation>
    <scope>NUCLEOTIDE SEQUENCE [LARGE SCALE GENOMIC DNA]</scope>
    <source>
        <strain>P125109</strain>
    </source>
</reference>
<organism>
    <name type="scientific">Salmonella enteritidis PT4 (strain P125109)</name>
    <dbReference type="NCBI Taxonomy" id="550537"/>
    <lineage>
        <taxon>Bacteria</taxon>
        <taxon>Pseudomonadati</taxon>
        <taxon>Pseudomonadota</taxon>
        <taxon>Gammaproteobacteria</taxon>
        <taxon>Enterobacterales</taxon>
        <taxon>Enterobacteriaceae</taxon>
        <taxon>Salmonella</taxon>
    </lineage>
</organism>
<accession>B5R2A1</accession>
<name>TUSC_SALEP</name>
<sequence>MKRIAFVFSTAPHGSASGREGLDALLATSALTEALGVFFISDGVFQLLPGQKPDAVLARDYIATFKLFDLYDIDQCWICAASLRERGLENVNFVVDATPLEPVALRRELGNYDVILRF</sequence>
<gene>
    <name evidence="1" type="primary">tusC</name>
    <name type="ordered locus">SEN3278</name>
</gene>